<accession>Q9F7P4</accession>
<reference key="1">
    <citation type="journal article" date="2000" name="Science">
        <title>Bacterial rhodopsin: evidence for a new type of phototrophy in the sea.</title>
        <authorList>
            <person name="Beja O."/>
            <person name="Aravind L."/>
            <person name="Koonin E.V."/>
            <person name="Suzuki M.T."/>
            <person name="Hadd A."/>
            <person name="Nguyen L.P."/>
            <person name="Jovanovich S.B."/>
            <person name="Gates C.M."/>
            <person name="Feldman R.A."/>
            <person name="Spudich J.L."/>
            <person name="Spudich E.N."/>
            <person name="DeLong E.F."/>
        </authorList>
    </citation>
    <scope>NUCLEOTIDE SEQUENCE [GENOMIC DNA]</scope>
</reference>
<reference key="2">
    <citation type="journal article" date="2002" name="BMC Physiol.">
        <title>Detection of fast light-activated H+ release and M intermediate formation from proteorhodopsin.</title>
        <authorList>
            <person name="Krebs R.A."/>
            <person name="Alexiev U."/>
            <person name="Partha R."/>
            <person name="DeVita A."/>
            <person name="Braiman M.S."/>
        </authorList>
    </citation>
    <scope>CHARACTERIZATION OF PROTON RELEASE CYCLE</scope>
    <scope>MUTAGENESIS OF CYS-107; CYS-156 AND CYS-175</scope>
</reference>
<reference key="3">
    <citation type="journal article" date="2002" name="Biochemistry">
        <title>Proton transfers in the photochemical reaction cycle of proteorhodopsin.</title>
        <authorList>
            <person name="Dioumaev A.K."/>
            <person name="Brown L.S."/>
            <person name="Shih J."/>
            <person name="Spudich E.N."/>
            <person name="Spudich J.L."/>
            <person name="Lanyi J.K."/>
        </authorList>
    </citation>
    <scope>CHARACTERIZATION OF PHOTOCHEMICAL CYCLE</scope>
    <scope>MUTAGENESIS OF ASP-97 AND GLU-108</scope>
</reference>
<reference key="4">
    <citation type="journal article" date="2003" name="Biophys. J.">
        <title>Characterization of the photochemical reaction cycle of proteorhodopsin.</title>
        <authorList>
            <person name="Varo G."/>
            <person name="Brown L.S."/>
            <person name="Lakatos M."/>
            <person name="Lanyi J.K."/>
        </authorList>
    </citation>
    <scope>CHARACTERIZATION OF PHOTOCHEMICAL CYCLE</scope>
</reference>
<reference key="5">
    <citation type="journal article" date="2003" name="J. Biol. Chem.">
        <title>Spectroscopic and photochemical characterization of a deep ocean proteorhodopsin.</title>
        <authorList>
            <person name="Wang W.W."/>
            <person name="Sineshchekov O.A."/>
            <person name="Spudich E.N."/>
            <person name="Spudich J.L."/>
        </authorList>
    </citation>
    <scope>COMPARISON WITH PHOTOCHEMICAL CYCLE OF BLUE PROTEORHODOPSIN</scope>
</reference>
<reference key="6">
    <citation type="journal article" date="2002" name="J. Mol. Biol.">
        <title>Proteorhodopsin is a light-driven proton pump with variable vectoriality.</title>
        <authorList>
            <person name="Friedrich T."/>
            <person name="Geibel S."/>
            <person name="Kalmbach R."/>
            <person name="Chizhov I."/>
            <person name="Ataka K."/>
            <person name="Heberle J."/>
            <person name="Engelhard M."/>
            <person name="Bamberg E."/>
        </authorList>
    </citation>
    <scope>PRELIMINARY CHARACTERIZATION OF PUMP VECTORIALITY</scope>
</reference>
<reference key="7">
    <citation type="journal article" date="2003" name="Biophys. J.">
        <title>The photochemical reaction cycle of proteorhodopsin at low pH.</title>
        <authorList>
            <person name="Lakatos M."/>
            <person name="Lanyi J.K."/>
            <person name="Szakacs J."/>
            <person name="Varo G."/>
        </authorList>
    </citation>
    <scope>CHARACTERIZATION OF PUMP VECTORIALITY</scope>
</reference>
<reference key="8">
    <citation type="journal article" date="2003" name="Biochemistry">
        <title>Proton transport by proteorhodopsin requires that the retinal Schiff base counterion Asp-97 be anionic.</title>
        <authorList>
            <person name="Dioumaev A.K."/>
            <person name="Wang J.M."/>
            <person name="Balint Z."/>
            <person name="Varo G."/>
            <person name="Lanyi J.K."/>
        </authorList>
    </citation>
    <scope>CHARACTERIZATION OF PUMP VECTORIALITY</scope>
</reference>
<reference key="9">
    <citation type="journal article" date="2001" name="Nature">
        <title>Proteorhodopsin phototrophy in the ocean.</title>
        <authorList>
            <person name="Beja O."/>
            <person name="Spudich E.N."/>
            <person name="Spudich J.L."/>
            <person name="Leclerc M."/>
            <person name="DeLong E.F."/>
        </authorList>
    </citation>
    <scope>ENVIRONMENTAL DISTRIBUTION</scope>
</reference>
<reference key="10">
    <citation type="journal article" date="2003" name="EMBO J.">
        <title>Diversification and spectral tuning in marine proteorhodopsins.</title>
        <authorList>
            <person name="Man D."/>
            <person name="Wang W."/>
            <person name="Sabehi G."/>
            <person name="Aravind L."/>
            <person name="Post A.F."/>
            <person name="Massana R."/>
            <person name="Spudich E.N."/>
            <person name="Spudich J.L."/>
            <person name="Beja O."/>
        </authorList>
    </citation>
    <scope>ENVIRONMENTAL DISTRIBUTION</scope>
    <scope>MUTAGENESIS OF VAL-68 AND LEU-105</scope>
</reference>
<proteinExistence type="evidence at protein level"/>
<protein>
    <recommendedName>
        <fullName>Green-light absorbing proteorhodopsin</fullName>
        <shortName>GPR</shortName>
    </recommendedName>
</protein>
<name>PRRG_PRB01</name>
<comment type="function">
    <text>Light-driven proton pump that generates photothrophic energy.</text>
</comment>
<comment type="subcellular location">
    <subcellularLocation>
        <location evidence="6">Cell membrane</location>
        <topology evidence="6">Multi-pass membrane protein</topology>
    </subcellularLocation>
</comment>
<comment type="PTM">
    <text evidence="1">Contains one covalently linked retinal chromophore.</text>
</comment>
<comment type="miscellaneous">
    <text>It presents a fast proton release and an alkaliphilic photocycle, consistent with its marine origin and the near-surface environment where this bacterium was collected. Transport occurs only at pHs above 7 and is unidirectional.</text>
</comment>
<comment type="miscellaneous">
    <text>Mutagenesis experiments that removed all the Cys residues of GPR show that at least one of the Cys residues in the protein is probably modified post-translationally.</text>
</comment>
<comment type="similarity">
    <text evidence="6">Belongs to the archaeal/bacterial/fungal opsin family.</text>
</comment>
<feature type="signal peptide" evidence="2">
    <location>
        <begin position="1"/>
        <end position="17"/>
    </location>
</feature>
<feature type="chain" id="PRO_0000020256" description="Green-light absorbing proteorhodopsin">
    <location>
        <begin position="18"/>
        <end position="249"/>
    </location>
</feature>
<feature type="transmembrane region" description="Helical" evidence="2">
    <location>
        <begin position="30"/>
        <end position="49"/>
    </location>
</feature>
<feature type="transmembrane region" description="Helical" evidence="2">
    <location>
        <begin position="62"/>
        <end position="84"/>
    </location>
</feature>
<feature type="transmembrane region" description="Helical" evidence="2">
    <location>
        <begin position="99"/>
        <end position="121"/>
    </location>
</feature>
<feature type="transmembrane region" description="Helical" evidence="2">
    <location>
        <begin position="128"/>
        <end position="147"/>
    </location>
</feature>
<feature type="transmembrane region" description="Helical" evidence="2">
    <location>
        <begin position="151"/>
        <end position="168"/>
    </location>
</feature>
<feature type="transmembrane region" description="Helical" evidence="2">
    <location>
        <begin position="189"/>
        <end position="211"/>
    </location>
</feature>
<feature type="transmembrane region" description="Helical" evidence="2">
    <location>
        <begin position="221"/>
        <end position="243"/>
    </location>
</feature>
<feature type="site" description="Primary proton acceptor">
    <location>
        <position position="97"/>
    </location>
</feature>
<feature type="site" description="Responsible for spectral tuning">
    <location>
        <position position="105"/>
    </location>
</feature>
<feature type="site" description="Primary proton donor">
    <location>
        <position position="108"/>
    </location>
</feature>
<feature type="modified residue" description="N6-(retinylidene)lysine" evidence="1">
    <location>
        <position position="231"/>
    </location>
</feature>
<feature type="mutagenesis site" description="No effect." evidence="5">
    <original>V</original>
    <variation>I</variation>
    <location>
        <position position="68"/>
    </location>
</feature>
<feature type="mutagenesis site" description="Slight changes in spectral shifts; more rapid formation of the M intermediate." evidence="4">
    <original>D</original>
    <variation>E</variation>
    <location>
        <position position="97"/>
    </location>
</feature>
<feature type="mutagenesis site" description="Elimination of the pH-induced shift and stabilization of the absorption spectrum in the acidic form." evidence="4">
    <original>D</original>
    <variation>N</variation>
    <location>
        <position position="97"/>
    </location>
</feature>
<feature type="mutagenesis site" description="Absorbs blue light; slower photocycle." evidence="5">
    <original>L</original>
    <variation>Q</variation>
    <location>
        <position position="105"/>
    </location>
</feature>
<feature type="mutagenesis site" description="Lower molecular weight on SDS gels potentially due to failure to bind either sugar or lipid; when associated with S-156 and S-175." evidence="3">
    <original>C</original>
    <variation>S</variation>
    <location>
        <position position="107"/>
    </location>
</feature>
<feature type="mutagenesis site" description="Changes in the photocycle." evidence="4">
    <original>E</original>
    <variation>Q</variation>
    <location>
        <position position="108"/>
    </location>
</feature>
<feature type="mutagenesis site" description="Lower molecular weight on SDS gels potentially due to failure to bind either sugar or lipid; when associated with S-107 and S-175." evidence="3">
    <original>C</original>
    <variation>S</variation>
    <location>
        <position position="156"/>
    </location>
</feature>
<feature type="mutagenesis site" description="Lower molecular weight on SDS gels potentially due to failure to bind either sugar or lipid; when associated with S-107 and S-156." evidence="3">
    <original>C</original>
    <variation>S</variation>
    <location>
        <position position="175"/>
    </location>
</feature>
<feature type="helix" evidence="7">
    <location>
        <begin position="25"/>
        <end position="49"/>
    </location>
</feature>
<feature type="helix" evidence="7">
    <location>
        <begin position="50"/>
        <end position="52"/>
    </location>
</feature>
<feature type="helix" evidence="7">
    <location>
        <begin position="59"/>
        <end position="86"/>
    </location>
</feature>
<feature type="helix" evidence="7">
    <location>
        <begin position="91"/>
        <end position="114"/>
    </location>
</feature>
<feature type="turn" evidence="7">
    <location>
        <begin position="115"/>
        <end position="117"/>
    </location>
</feature>
<feature type="helix" evidence="7">
    <location>
        <begin position="122"/>
        <end position="143"/>
    </location>
</feature>
<feature type="turn" evidence="7">
    <location>
        <begin position="148"/>
        <end position="150"/>
    </location>
</feature>
<feature type="helix" evidence="7">
    <location>
        <begin position="151"/>
        <end position="166"/>
    </location>
</feature>
<feature type="turn" evidence="7">
    <location>
        <begin position="171"/>
        <end position="173"/>
    </location>
</feature>
<feature type="strand" evidence="7">
    <location>
        <begin position="174"/>
        <end position="177"/>
    </location>
</feature>
<feature type="helix" evidence="7">
    <location>
        <begin position="180"/>
        <end position="208"/>
    </location>
</feature>
<feature type="strand" evidence="7">
    <location>
        <begin position="210"/>
        <end position="213"/>
    </location>
</feature>
<feature type="helix" evidence="7">
    <location>
        <begin position="216"/>
        <end position="229"/>
    </location>
</feature>
<feature type="helix" evidence="7">
    <location>
        <begin position="232"/>
        <end position="247"/>
    </location>
</feature>
<keyword id="KW-0002">3D-structure</keyword>
<keyword id="KW-1003">Cell membrane</keyword>
<keyword id="KW-0157">Chromophore</keyword>
<keyword id="KW-0375">Hydrogen ion transport</keyword>
<keyword id="KW-0406">Ion transport</keyword>
<keyword id="KW-0472">Membrane</keyword>
<keyword id="KW-0600">Photoreceptor protein</keyword>
<keyword id="KW-0675">Receptor</keyword>
<keyword id="KW-0681">Retinal protein</keyword>
<keyword id="KW-0716">Sensory transduction</keyword>
<keyword id="KW-0732">Signal</keyword>
<keyword id="KW-0812">Transmembrane</keyword>
<keyword id="KW-1133">Transmembrane helix</keyword>
<keyword id="KW-0813">Transport</keyword>
<evidence type="ECO:0000250" key="1"/>
<evidence type="ECO:0000255" key="2"/>
<evidence type="ECO:0000269" key="3">
    <source>
    </source>
</evidence>
<evidence type="ECO:0000269" key="4">
    <source>
    </source>
</evidence>
<evidence type="ECO:0000269" key="5">
    <source>
    </source>
</evidence>
<evidence type="ECO:0000305" key="6"/>
<evidence type="ECO:0007829" key="7">
    <source>
        <dbReference type="PDB" id="2L6X"/>
    </source>
</evidence>
<organism>
    <name type="scientific">Gamma-proteobacterium EBAC31A08</name>
    <dbReference type="NCBI Taxonomy" id="133804"/>
    <lineage>
        <taxon>Bacteria</taxon>
        <taxon>Pseudomonadati</taxon>
        <taxon>Pseudomonadota</taxon>
        <taxon>Gammaproteobacteria</taxon>
        <taxon>environmental samples</taxon>
    </lineage>
</organism>
<sequence length="249" mass="27251">MKLLLILGSVIALPTFAAGGGDLDASDYTGVSFWLVTAALLASTVFFFVERDRVSAKWKTSLTVSGLVTGIAFWHYMYMRGVWIETGDSPTVFRYIDWLLTVPLLICEFYLILAAATNVAGSLFKKLLVGSLVMLVFGYMGEAGIMAAWPAFIIGCLAWVYMIYELWAGEGKSACNTASPAVQSAYNTMMYIIIFGWAIYPVGYFTGYLMGDGGSALNLNLIYNLADFVNKILFGLIIWNVAVKESSNA</sequence>
<dbReference type="EMBL" id="AF279106">
    <property type="protein sequence ID" value="AAG10475.1"/>
    <property type="molecule type" value="Genomic_DNA"/>
</dbReference>
<dbReference type="PDB" id="2L6X">
    <property type="method" value="NMR"/>
    <property type="chains" value="A=19-249"/>
</dbReference>
<dbReference type="PDB" id="5ABB">
    <property type="method" value="EM"/>
    <property type="resolution" value="8.00 A"/>
    <property type="chains" value="Z=19-83"/>
</dbReference>
<dbReference type="PDBsum" id="2L6X"/>
<dbReference type="PDBsum" id="5ABB"/>
<dbReference type="BMRB" id="Q9F7P4"/>
<dbReference type="SMR" id="Q9F7P4"/>
<dbReference type="TCDB" id="3.E.1.6.1">
    <property type="family name" value="the ion-translocating microbial rhodopsin (mr) family"/>
</dbReference>
<dbReference type="EvolutionaryTrace" id="Q9F7P4"/>
<dbReference type="GO" id="GO:0005886">
    <property type="term" value="C:plasma membrane"/>
    <property type="evidence" value="ECO:0007669"/>
    <property type="project" value="UniProtKB-SubCell"/>
</dbReference>
<dbReference type="GO" id="GO:0010461">
    <property type="term" value="F:light-activated monoatomic ion channel activity"/>
    <property type="evidence" value="ECO:0007669"/>
    <property type="project" value="InterPro"/>
</dbReference>
<dbReference type="GO" id="GO:0009881">
    <property type="term" value="F:photoreceptor activity"/>
    <property type="evidence" value="ECO:0007669"/>
    <property type="project" value="UniProtKB-KW"/>
</dbReference>
<dbReference type="GO" id="GO:0007602">
    <property type="term" value="P:phototransduction"/>
    <property type="evidence" value="ECO:0007669"/>
    <property type="project" value="UniProtKB-KW"/>
</dbReference>
<dbReference type="GO" id="GO:1902600">
    <property type="term" value="P:proton transmembrane transport"/>
    <property type="evidence" value="ECO:0007669"/>
    <property type="project" value="UniProtKB-KW"/>
</dbReference>
<dbReference type="CDD" id="cd15242">
    <property type="entry name" value="7tm_Proteorhodopsin"/>
    <property type="match status" value="1"/>
</dbReference>
<dbReference type="Gene3D" id="1.20.1070.10">
    <property type="entry name" value="Rhodopsin 7-helix transmembrane proteins"/>
    <property type="match status" value="1"/>
</dbReference>
<dbReference type="InterPro" id="IPR001425">
    <property type="entry name" value="Arc/bac/fun_rhodopsins"/>
</dbReference>
<dbReference type="InterPro" id="IPR017402">
    <property type="entry name" value="Proteorhodopsin"/>
</dbReference>
<dbReference type="InterPro" id="IPR018229">
    <property type="entry name" value="Rhodopsin_retinal_BS"/>
</dbReference>
<dbReference type="PANTHER" id="PTHR28286">
    <property type="match status" value="1"/>
</dbReference>
<dbReference type="PANTHER" id="PTHR28286:SF2">
    <property type="entry name" value="BACTERIORHODOPSIN _OPSIN, NOPA (EUROFUNG)"/>
    <property type="match status" value="1"/>
</dbReference>
<dbReference type="Pfam" id="PF01036">
    <property type="entry name" value="Bac_rhodopsin"/>
    <property type="match status" value="1"/>
</dbReference>
<dbReference type="PIRSF" id="PIRSF038142">
    <property type="entry name" value="Rhodopsin_bac_prd"/>
    <property type="match status" value="1"/>
</dbReference>
<dbReference type="SMART" id="SM01021">
    <property type="entry name" value="Bac_rhodopsin"/>
    <property type="match status" value="1"/>
</dbReference>
<dbReference type="SUPFAM" id="SSF81321">
    <property type="entry name" value="Family A G protein-coupled receptor-like"/>
    <property type="match status" value="1"/>
</dbReference>
<dbReference type="PROSITE" id="PS00950">
    <property type="entry name" value="BACTERIAL_OPSIN_1"/>
    <property type="match status" value="1"/>
</dbReference>